<proteinExistence type="inferred from homology"/>
<feature type="chain" id="PRO_1000199912" description="Sulfur carrier protein TusA">
    <location>
        <begin position="1"/>
        <end position="81"/>
    </location>
</feature>
<feature type="active site" description="Cysteine persulfide intermediate" evidence="1">
    <location>
        <position position="19"/>
    </location>
</feature>
<dbReference type="EMBL" id="CP000948">
    <property type="protein sequence ID" value="ACB04526.1"/>
    <property type="molecule type" value="Genomic_DNA"/>
</dbReference>
<dbReference type="RefSeq" id="WP_000130621.1">
    <property type="nucleotide sequence ID" value="NC_010473.1"/>
</dbReference>
<dbReference type="BMRB" id="B1X7S8"/>
<dbReference type="SMR" id="B1X7S8"/>
<dbReference type="GeneID" id="93778521"/>
<dbReference type="KEGG" id="ecd:ECDH10B_3644"/>
<dbReference type="HOGENOM" id="CLU_165255_5_0_6"/>
<dbReference type="GO" id="GO:0005737">
    <property type="term" value="C:cytoplasm"/>
    <property type="evidence" value="ECO:0007669"/>
    <property type="project" value="UniProtKB-SubCell"/>
</dbReference>
<dbReference type="GO" id="GO:0097163">
    <property type="term" value="F:sulfur carrier activity"/>
    <property type="evidence" value="ECO:0007669"/>
    <property type="project" value="UniProtKB-UniRule"/>
</dbReference>
<dbReference type="GO" id="GO:0002143">
    <property type="term" value="P:tRNA wobble position uridine thiolation"/>
    <property type="evidence" value="ECO:0007669"/>
    <property type="project" value="InterPro"/>
</dbReference>
<dbReference type="CDD" id="cd03423">
    <property type="entry name" value="SirA"/>
    <property type="match status" value="1"/>
</dbReference>
<dbReference type="FunFam" id="3.30.110.40:FF:000002">
    <property type="entry name" value="Sulfur carrier protein TusA"/>
    <property type="match status" value="1"/>
</dbReference>
<dbReference type="Gene3D" id="3.30.110.40">
    <property type="entry name" value="TusA-like domain"/>
    <property type="match status" value="1"/>
</dbReference>
<dbReference type="HAMAP" id="MF_00413">
    <property type="entry name" value="Thiourid_synth_A"/>
    <property type="match status" value="1"/>
</dbReference>
<dbReference type="InterPro" id="IPR022931">
    <property type="entry name" value="Sulphur_carrier_TusA"/>
</dbReference>
<dbReference type="InterPro" id="IPR001455">
    <property type="entry name" value="TusA-like"/>
</dbReference>
<dbReference type="InterPro" id="IPR036868">
    <property type="entry name" value="TusA-like_sf"/>
</dbReference>
<dbReference type="NCBIfam" id="NF001423">
    <property type="entry name" value="PRK00299.1"/>
    <property type="match status" value="1"/>
</dbReference>
<dbReference type="PANTHER" id="PTHR33279:SF2">
    <property type="entry name" value="SULFUR CARRIER PROTEIN TUSA"/>
    <property type="match status" value="1"/>
</dbReference>
<dbReference type="PANTHER" id="PTHR33279">
    <property type="entry name" value="SULFUR CARRIER PROTEIN YEDF-RELATED"/>
    <property type="match status" value="1"/>
</dbReference>
<dbReference type="Pfam" id="PF01206">
    <property type="entry name" value="TusA"/>
    <property type="match status" value="1"/>
</dbReference>
<dbReference type="SUPFAM" id="SSF64307">
    <property type="entry name" value="SirA-like"/>
    <property type="match status" value="1"/>
</dbReference>
<dbReference type="PROSITE" id="PS01148">
    <property type="entry name" value="UPF0033"/>
    <property type="match status" value="1"/>
</dbReference>
<name>TUSA_ECODH</name>
<sequence length="81" mass="9095">MTDLFSSPDHTLDALGLRCPEPVMMVRKTVRNMQPGETLLIIADDPATTRDIPGFCTFMEHELVAKETDGLPYRYLIRKGG</sequence>
<reference key="1">
    <citation type="journal article" date="2008" name="J. Bacteriol.">
        <title>The complete genome sequence of Escherichia coli DH10B: insights into the biology of a laboratory workhorse.</title>
        <authorList>
            <person name="Durfee T."/>
            <person name="Nelson R."/>
            <person name="Baldwin S."/>
            <person name="Plunkett G. III"/>
            <person name="Burland V."/>
            <person name="Mau B."/>
            <person name="Petrosino J.F."/>
            <person name="Qin X."/>
            <person name="Muzny D.M."/>
            <person name="Ayele M."/>
            <person name="Gibbs R.A."/>
            <person name="Csorgo B."/>
            <person name="Posfai G."/>
            <person name="Weinstock G.M."/>
            <person name="Blattner F.R."/>
        </authorList>
    </citation>
    <scope>NUCLEOTIDE SEQUENCE [LARGE SCALE GENOMIC DNA]</scope>
    <source>
        <strain>K12 / DH10B</strain>
    </source>
</reference>
<gene>
    <name evidence="1" type="primary">tusA</name>
    <name type="ordered locus">ECDH10B_3644</name>
</gene>
<accession>B1X7S8</accession>
<keyword id="KW-0963">Cytoplasm</keyword>
<keyword id="KW-0819">tRNA processing</keyword>
<comment type="function">
    <text evidence="1">Sulfur carrier protein involved in sulfur trafficking in the cell. Part of a sulfur-relay system required for 2-thiolation during synthesis of 2-thiouridine of the modified wobble base 5-methylaminomethyl-2-thiouridine (mnm(5)s(2)U) in tRNA. Interacts with IscS and stimulates its cysteine desulfurase activity. Accepts an activated sulfur from IscS, which is then transferred to TusD, and thus determines the direction of sulfur flow from IscS to 2-thiouridine formation. Also appears to be involved in sulfur transfer for the biosynthesis of molybdopterin.</text>
</comment>
<comment type="pathway">
    <text evidence="1">tRNA modification.</text>
</comment>
<comment type="subunit">
    <text evidence="1">Interacts with IscS.</text>
</comment>
<comment type="subcellular location">
    <subcellularLocation>
        <location evidence="1">Cytoplasm</location>
    </subcellularLocation>
</comment>
<comment type="similarity">
    <text evidence="1">Belongs to the sulfur carrier protein TusA family.</text>
</comment>
<evidence type="ECO:0000255" key="1">
    <source>
        <dbReference type="HAMAP-Rule" id="MF_00413"/>
    </source>
</evidence>
<organism>
    <name type="scientific">Escherichia coli (strain K12 / DH10B)</name>
    <dbReference type="NCBI Taxonomy" id="316385"/>
    <lineage>
        <taxon>Bacteria</taxon>
        <taxon>Pseudomonadati</taxon>
        <taxon>Pseudomonadota</taxon>
        <taxon>Gammaproteobacteria</taxon>
        <taxon>Enterobacterales</taxon>
        <taxon>Enterobacteriaceae</taxon>
        <taxon>Escherichia</taxon>
    </lineage>
</organism>
<protein>
    <recommendedName>
        <fullName evidence="1">Sulfur carrier protein TusA</fullName>
    </recommendedName>
    <alternativeName>
        <fullName evidence="1">Sulfur mediator TusA</fullName>
    </alternativeName>
    <alternativeName>
        <fullName evidence="1">Sulfur transfer protein TusA</fullName>
    </alternativeName>
    <alternativeName>
        <fullName evidence="1">tRNA 2-thiouridine synthesizing protein A</fullName>
    </alternativeName>
</protein>